<sequence length="34" mass="3856">DWRVLVVLLPVLLAAGWAVRNILPYAVKQVQKLL</sequence>
<organism>
    <name type="scientific">Thermostichus vulcanus</name>
    <name type="common">Synechococcus vulcanus</name>
    <dbReference type="NCBI Taxonomy" id="32053"/>
    <lineage>
        <taxon>Bacteria</taxon>
        <taxon>Bacillati</taxon>
        <taxon>Cyanobacteriota</taxon>
        <taxon>Cyanophyceae</taxon>
        <taxon>Thermostichales</taxon>
        <taxon>Thermostichaceae</taxon>
        <taxon>Thermostichus</taxon>
    </lineage>
</organism>
<proteinExistence type="evidence at protein level"/>
<name>PSBY_THEVL</name>
<feature type="chain" id="PRO_0000422605" description="Photosystem II reaction center protein Y">
    <location>
        <begin position="1" status="less than"/>
        <end position="34" status="greater than"/>
    </location>
</feature>
<feature type="topological domain" description="Lumenal" evidence="2">
    <location>
        <begin position="1"/>
        <end position="5"/>
    </location>
</feature>
<feature type="transmembrane region" description="Helical" evidence="2">
    <location>
        <begin position="6"/>
        <end position="22"/>
    </location>
</feature>
<feature type="topological domain" description="Cytoplasmic" evidence="2">
    <location>
        <begin position="23"/>
        <end position="34"/>
    </location>
</feature>
<feature type="non-terminal residue">
    <location>
        <position position="1"/>
    </location>
</feature>
<feature type="non-terminal residue">
    <location>
        <position position="34"/>
    </location>
</feature>
<feature type="helix" evidence="3">
    <location>
        <begin position="2"/>
        <end position="33"/>
    </location>
</feature>
<gene>
    <name evidence="1" type="primary">psbY</name>
</gene>
<keyword id="KW-0002">3D-structure</keyword>
<keyword id="KW-0472">Membrane</keyword>
<keyword id="KW-0602">Photosynthesis</keyword>
<keyword id="KW-0604">Photosystem II</keyword>
<keyword id="KW-0793">Thylakoid</keyword>
<keyword id="KW-0812">Transmembrane</keyword>
<keyword id="KW-1133">Transmembrane helix</keyword>
<accession>P0DM37</accession>
<dbReference type="PDB" id="4IL6">
    <property type="method" value="X-ray"/>
    <property type="resolution" value="2.10 A"/>
    <property type="chains" value="R=1-28"/>
</dbReference>
<dbReference type="PDB" id="4UB6">
    <property type="method" value="X-ray"/>
    <property type="resolution" value="1.95 A"/>
    <property type="chains" value="R=1-34"/>
</dbReference>
<dbReference type="PDB" id="4UB8">
    <property type="method" value="X-ray"/>
    <property type="resolution" value="1.95 A"/>
    <property type="chains" value="R=1-34"/>
</dbReference>
<dbReference type="PDB" id="5GTH">
    <property type="method" value="X-ray"/>
    <property type="resolution" value="2.50 A"/>
    <property type="chains" value="R=1-34"/>
</dbReference>
<dbReference type="PDB" id="5GTI">
    <property type="method" value="X-ray"/>
    <property type="resolution" value="2.50 A"/>
    <property type="chains" value="R=1-34"/>
</dbReference>
<dbReference type="PDB" id="5WS5">
    <property type="method" value="X-ray"/>
    <property type="resolution" value="2.35 A"/>
    <property type="chains" value="R=1-34"/>
</dbReference>
<dbReference type="PDB" id="5WS6">
    <property type="method" value="X-ray"/>
    <property type="resolution" value="2.35 A"/>
    <property type="chains" value="R=1-34"/>
</dbReference>
<dbReference type="PDB" id="6JLJ">
    <property type="method" value="X-ray"/>
    <property type="resolution" value="2.15 A"/>
    <property type="chains" value="R=1-34"/>
</dbReference>
<dbReference type="PDB" id="6JLK">
    <property type="method" value="X-ray"/>
    <property type="resolution" value="2.15 A"/>
    <property type="chains" value="R=1-34"/>
</dbReference>
<dbReference type="PDB" id="6JLL">
    <property type="method" value="X-ray"/>
    <property type="resolution" value="2.15 A"/>
    <property type="chains" value="R=1-34"/>
</dbReference>
<dbReference type="PDB" id="6JLM">
    <property type="method" value="X-ray"/>
    <property type="resolution" value="2.35 A"/>
    <property type="chains" value="R=1-34"/>
</dbReference>
<dbReference type="PDB" id="6JLN">
    <property type="method" value="X-ray"/>
    <property type="resolution" value="2.40 A"/>
    <property type="chains" value="R=1-34"/>
</dbReference>
<dbReference type="PDB" id="6JLO">
    <property type="method" value="X-ray"/>
    <property type="resolution" value="2.40 A"/>
    <property type="chains" value="R=1-34"/>
</dbReference>
<dbReference type="PDB" id="6JLP">
    <property type="method" value="X-ray"/>
    <property type="resolution" value="2.50 A"/>
    <property type="chains" value="R=1-34"/>
</dbReference>
<dbReference type="PDB" id="7CJI">
    <property type="method" value="X-ray"/>
    <property type="resolution" value="2.35 A"/>
    <property type="chains" value="R=1-34"/>
</dbReference>
<dbReference type="PDB" id="7CJJ">
    <property type="method" value="X-ray"/>
    <property type="resolution" value="2.40 A"/>
    <property type="chains" value="R=1-34"/>
</dbReference>
<dbReference type="PDB" id="7COU">
    <property type="method" value="X-ray"/>
    <property type="resolution" value="2.25 A"/>
    <property type="chains" value="R=1-34"/>
</dbReference>
<dbReference type="PDB" id="7D1T">
    <property type="method" value="EM"/>
    <property type="resolution" value="1.95 A"/>
    <property type="chains" value="R/r=1-34"/>
</dbReference>
<dbReference type="PDB" id="7D1U">
    <property type="method" value="EM"/>
    <property type="resolution" value="2.08 A"/>
    <property type="chains" value="R/r=1-34"/>
</dbReference>
<dbReference type="PDB" id="7EDA">
    <property type="method" value="EM"/>
    <property type="resolution" value="2.78 A"/>
    <property type="chains" value="R=1-34"/>
</dbReference>
<dbReference type="PDB" id="8IR5">
    <property type="method" value="X-ray"/>
    <property type="resolution" value="2.15 A"/>
    <property type="chains" value="R=1-34"/>
</dbReference>
<dbReference type="PDB" id="8IR6">
    <property type="method" value="X-ray"/>
    <property type="resolution" value="2.20 A"/>
    <property type="chains" value="R=1-34"/>
</dbReference>
<dbReference type="PDB" id="8IR7">
    <property type="method" value="X-ray"/>
    <property type="resolution" value="2.25 A"/>
    <property type="chains" value="R=1-34"/>
</dbReference>
<dbReference type="PDB" id="8IR8">
    <property type="method" value="X-ray"/>
    <property type="resolution" value="2.25 A"/>
    <property type="chains" value="R=1-34"/>
</dbReference>
<dbReference type="PDB" id="8IR9">
    <property type="method" value="X-ray"/>
    <property type="resolution" value="2.20 A"/>
    <property type="chains" value="R=1-34"/>
</dbReference>
<dbReference type="PDB" id="8IRA">
    <property type="method" value="X-ray"/>
    <property type="resolution" value="2.20 A"/>
    <property type="chains" value="R=1-34"/>
</dbReference>
<dbReference type="PDB" id="8IRB">
    <property type="method" value="X-ray"/>
    <property type="resolution" value="2.30 A"/>
    <property type="chains" value="R=1-34"/>
</dbReference>
<dbReference type="PDB" id="8IRC">
    <property type="method" value="X-ray"/>
    <property type="resolution" value="2.25 A"/>
    <property type="chains" value="R=1-34"/>
</dbReference>
<dbReference type="PDB" id="8IRD">
    <property type="method" value="X-ray"/>
    <property type="resolution" value="2.30 A"/>
    <property type="chains" value="R=1-34"/>
</dbReference>
<dbReference type="PDB" id="8IRE">
    <property type="method" value="X-ray"/>
    <property type="resolution" value="2.25 A"/>
    <property type="chains" value="R=1-34"/>
</dbReference>
<dbReference type="PDB" id="8IRF">
    <property type="method" value="X-ray"/>
    <property type="resolution" value="2.25 A"/>
    <property type="chains" value="R=1-34"/>
</dbReference>
<dbReference type="PDB" id="8IRG">
    <property type="method" value="X-ray"/>
    <property type="resolution" value="2.30 A"/>
    <property type="chains" value="R=1-34"/>
</dbReference>
<dbReference type="PDB" id="8IRH">
    <property type="method" value="X-ray"/>
    <property type="resolution" value="2.25 A"/>
    <property type="chains" value="R=1-34"/>
</dbReference>
<dbReference type="PDB" id="8IRI">
    <property type="method" value="X-ray"/>
    <property type="resolution" value="2.25 A"/>
    <property type="chains" value="R=1-34"/>
</dbReference>
<dbReference type="PDBsum" id="4IL6"/>
<dbReference type="PDBsum" id="4UB6"/>
<dbReference type="PDBsum" id="4UB8"/>
<dbReference type="PDBsum" id="5GTH"/>
<dbReference type="PDBsum" id="5GTI"/>
<dbReference type="PDBsum" id="5WS5"/>
<dbReference type="PDBsum" id="5WS6"/>
<dbReference type="PDBsum" id="6JLJ"/>
<dbReference type="PDBsum" id="6JLK"/>
<dbReference type="PDBsum" id="6JLL"/>
<dbReference type="PDBsum" id="6JLM"/>
<dbReference type="PDBsum" id="6JLN"/>
<dbReference type="PDBsum" id="6JLO"/>
<dbReference type="PDBsum" id="6JLP"/>
<dbReference type="PDBsum" id="7CJI"/>
<dbReference type="PDBsum" id="7CJJ"/>
<dbReference type="PDBsum" id="7COU"/>
<dbReference type="PDBsum" id="7D1T"/>
<dbReference type="PDBsum" id="7D1U"/>
<dbReference type="PDBsum" id="7EDA"/>
<dbReference type="PDBsum" id="8IR5"/>
<dbReference type="PDBsum" id="8IR6"/>
<dbReference type="PDBsum" id="8IR7"/>
<dbReference type="PDBsum" id="8IR8"/>
<dbReference type="PDBsum" id="8IR9"/>
<dbReference type="PDBsum" id="8IRA"/>
<dbReference type="PDBsum" id="8IRB"/>
<dbReference type="PDBsum" id="8IRC"/>
<dbReference type="PDBsum" id="8IRD"/>
<dbReference type="PDBsum" id="8IRE"/>
<dbReference type="PDBsum" id="8IRF"/>
<dbReference type="PDBsum" id="8IRG"/>
<dbReference type="PDBsum" id="8IRH"/>
<dbReference type="PDBsum" id="8IRI"/>
<dbReference type="EMDB" id="EMD-30547"/>
<dbReference type="EMDB" id="EMD-30548"/>
<dbReference type="EMDB" id="EMD-31062"/>
<dbReference type="SMR" id="P0DM37"/>
<dbReference type="DIP" id="DIP-61468N"/>
<dbReference type="IntAct" id="P0DM37">
    <property type="interactions" value="1"/>
</dbReference>
<dbReference type="GO" id="GO:0009523">
    <property type="term" value="C:photosystem II"/>
    <property type="evidence" value="ECO:0007669"/>
    <property type="project" value="UniProtKB-KW"/>
</dbReference>
<dbReference type="GO" id="GO:0031676">
    <property type="term" value="C:plasma membrane-derived thylakoid membrane"/>
    <property type="evidence" value="ECO:0007669"/>
    <property type="project" value="UniProtKB-SubCell"/>
</dbReference>
<dbReference type="GO" id="GO:0030145">
    <property type="term" value="F:manganese ion binding"/>
    <property type="evidence" value="ECO:0007669"/>
    <property type="project" value="InterPro"/>
</dbReference>
<dbReference type="GO" id="GO:0015979">
    <property type="term" value="P:photosynthesis"/>
    <property type="evidence" value="ECO:0007669"/>
    <property type="project" value="UniProtKB-KW"/>
</dbReference>
<dbReference type="HAMAP" id="MF_00717">
    <property type="entry name" value="PSII_PsbY"/>
    <property type="match status" value="1"/>
</dbReference>
<dbReference type="InterPro" id="IPR009388">
    <property type="entry name" value="PSII_PsbY"/>
</dbReference>
<dbReference type="Pfam" id="PF06298">
    <property type="entry name" value="PsbY"/>
    <property type="match status" value="1"/>
</dbReference>
<evidence type="ECO:0000255" key="1">
    <source>
        <dbReference type="HAMAP-Rule" id="MF_00717"/>
    </source>
</evidence>
<evidence type="ECO:0000269" key="2">
    <source>
    </source>
</evidence>
<evidence type="ECO:0007829" key="3">
    <source>
        <dbReference type="PDB" id="4UB6"/>
    </source>
</evidence>
<comment type="function">
    <text evidence="1 2">Loosely associated component of the core of photosystem II (PSII). PSII is a light-driven water plastoquinone oxidoreductase, using light energy to abstract electrons from H(2)O, generating a proton gradient subsequently used for ATP formation.</text>
</comment>
<comment type="cofactor">
    <text evidence="2">PSII binds multiple chlorophylls, carotenoids and specific lipids.</text>
</comment>
<comment type="subunit">
    <text evidence="1 2">PSII is composed of 1 copy each of membrane proteins PsbA, PsbB, PsbC, PsbD, PsbE, PsbF, PsbH, PsbI, PsbJ, PsbK, PsbL, PsbM, PsbT, PsbX, PsbY, PsbZ, Psb30/Ycf12, peripheral proteins PsbO, CyanoQ (PsbQ), PsbU, PsbV and a large number of cofactors. It forms dimeric complexes (By similarity). This protein is only loosely associated with PSII, and is not often found in crystals.</text>
</comment>
<comment type="subcellular location">
    <subcellularLocation>
        <location evidence="1 2">Cellular thylakoid membrane</location>
        <topology evidence="1 2">Single-pass membrane protein</topology>
    </subcellularLocation>
</comment>
<comment type="similarity">
    <text evidence="1">Belongs to the PsbY family.</text>
</comment>
<reference key="1">
    <citation type="journal article" date="2013" name="Proc. Natl. Acad. Sci. U.S.A.">
        <title>Structure of Sr-substituted photosystem II at 2.1 A resolution and its implications in the mechanism of water oxidation.</title>
        <authorList>
            <person name="Koua F.H."/>
            <person name="Umena Y."/>
            <person name="Kawakami K."/>
            <person name="Shen J.R."/>
        </authorList>
    </citation>
    <scope>X-RAY CRYSTALLOGRAPHY (2.1 ANGSTROMS) IN PHOTOSYSTEM II</scope>
    <scope>FUNCTION</scope>
    <scope>COFACTOR</scope>
    <scope>SUBUNIT</scope>
    <scope>SUBCELLULAR LOCATION</scope>
    <scope>TOPOLOGY</scope>
</reference>
<protein>
    <recommendedName>
        <fullName evidence="1">Photosystem II reaction center protein Y</fullName>
    </recommendedName>
</protein>